<protein>
    <recommendedName>
        <fullName>Bifunctional protein glk</fullName>
    </recommendedName>
    <domain>
        <recommendedName>
            <fullName>Glucokinase</fullName>
            <ecNumber>2.7.1.2</ecNumber>
        </recommendedName>
        <alternativeName>
            <fullName>Glucose kinase</fullName>
        </alternativeName>
    </domain>
    <domain>
        <recommendedName>
            <fullName>Putative HTH-type transcriptional regulator</fullName>
        </recommendedName>
    </domain>
</protein>
<feature type="chain" id="PRO_0000268798" description="Bifunctional protein glk">
    <location>
        <begin position="1"/>
        <end position="641"/>
    </location>
</feature>
<feature type="transmembrane region" description="Helical" evidence="2">
    <location>
        <begin position="576"/>
        <end position="596"/>
    </location>
</feature>
<feature type="domain" description="HTH rpiR-type">
    <location>
        <begin position="341"/>
        <end position="417"/>
    </location>
</feature>
<feature type="domain" description="SIS">
    <location>
        <begin position="461"/>
        <end position="600"/>
    </location>
</feature>
<feature type="DNA-binding region" description="H-T-H motif" evidence="1">
    <location>
        <begin position="377"/>
        <end position="396"/>
    </location>
</feature>
<feature type="region of interest" description="Glucokinase">
    <location>
        <begin position="1"/>
        <end position="340"/>
    </location>
</feature>
<feature type="region of interest" description="Putative HTH-type transcriptional regulator">
    <location>
        <begin position="341"/>
        <end position="641"/>
    </location>
</feature>
<feature type="binding site" evidence="2">
    <location>
        <begin position="23"/>
        <end position="28"/>
    </location>
    <ligand>
        <name>ATP</name>
        <dbReference type="ChEBI" id="CHEBI:30616"/>
    </ligand>
</feature>
<comment type="catalytic activity">
    <reaction>
        <text>D-glucose + ATP = D-glucose 6-phosphate + ADP + H(+)</text>
        <dbReference type="Rhea" id="RHEA:17825"/>
        <dbReference type="ChEBI" id="CHEBI:4167"/>
        <dbReference type="ChEBI" id="CHEBI:15378"/>
        <dbReference type="ChEBI" id="CHEBI:30616"/>
        <dbReference type="ChEBI" id="CHEBI:61548"/>
        <dbReference type="ChEBI" id="CHEBI:456216"/>
        <dbReference type="EC" id="2.7.1.2"/>
    </reaction>
</comment>
<comment type="subcellular location">
    <subcellularLocation>
        <location evidence="3">Membrane</location>
        <topology evidence="3">Single-pass membrane protein</topology>
    </subcellularLocation>
</comment>
<comment type="similarity">
    <text evidence="3">In the N-terminal section; belongs to the bacterial glucokinase family.</text>
</comment>
<evidence type="ECO:0000250" key="1"/>
<evidence type="ECO:0000255" key="2"/>
<evidence type="ECO:0000305" key="3"/>
<reference key="1">
    <citation type="journal article" date="2010" name="Genome Biol. Evol.">
        <title>Continuing evolution of Burkholderia mallei through genome reduction and large-scale rearrangements.</title>
        <authorList>
            <person name="Losada L."/>
            <person name="Ronning C.M."/>
            <person name="DeShazer D."/>
            <person name="Woods D."/>
            <person name="Fedorova N."/>
            <person name="Kim H.S."/>
            <person name="Shabalina S.A."/>
            <person name="Pearson T.R."/>
            <person name="Brinkac L."/>
            <person name="Tan P."/>
            <person name="Nandi T."/>
            <person name="Crabtree J."/>
            <person name="Badger J."/>
            <person name="Beckstrom-Sternberg S."/>
            <person name="Saqib M."/>
            <person name="Schutzer S.E."/>
            <person name="Keim P."/>
            <person name="Nierman W.C."/>
        </authorList>
    </citation>
    <scope>NUCLEOTIDE SEQUENCE [LARGE SCALE GENOMIC DNA]</scope>
    <source>
        <strain>1710b</strain>
    </source>
</reference>
<sequence length="641" mass="68377">MSTGAQTKAAAASQHADGPRLLADVGGTNARFALETGPGEITQIRVYPGAEYPTLTDAIRKYLKDAKIGRVNHAAIAIANPVDGDQVRMTNHNWSFSIEATRRALGFDTLLVVNDFTALAMALPGLTDAQRVQIGGGTRRQNSVIGLMGPGTGLGVSGLIPADDRWIALGSEGGHATFAPMDEREDLVLQYARRKYPHVSFERVCAGPGMEIIYRALAARDKKRIAANVDTADIVERAHAGDALALEAVECFCAILGTFAGNLAVTLGALGGIYIGGGVVPKLGELFMRSPFRARFEAKGRFEAYLANIPTYLITAEYPAFLGVSAILAEQLSNRTGGASSAVFERIRQMRDALTPAERRVADLALNHPRSIINDPIVDIARKADVSQPTVIRFCRSLGCQGLSDFKLKLATGLTGTIPMSHSQVHLGDTATDFGAKVLDNTVSAILQLREHLNFEHVEQAIDILNNARRIEFYGLGNSNIVAQDAHYKFFRFGIPTIAYGDLYMQAASAALLGKGDVIVAVSKSGRAPELLRVLDVAMQAGAKVIAITSSNTPLAKRATVALETDHIEMRESQLSMISRILHLVMIDILAVGVAIRRAAPNAELAEAMARAKARAGASAGDEAADVLDWLSHGAAPAAKD</sequence>
<dbReference type="EC" id="2.7.1.2"/>
<dbReference type="EMBL" id="CP000124">
    <property type="protein sequence ID" value="ABA49272.1"/>
    <property type="molecule type" value="Genomic_DNA"/>
</dbReference>
<dbReference type="RefSeq" id="WP_004266877.1">
    <property type="nucleotide sequence ID" value="NC_007434.1"/>
</dbReference>
<dbReference type="SMR" id="Q3JPP0"/>
<dbReference type="EnsemblBacteria" id="ABA49272">
    <property type="protein sequence ID" value="ABA49272"/>
    <property type="gene ID" value="BURPS1710b_3090"/>
</dbReference>
<dbReference type="KEGG" id="bpm:BURPS1710b_3090"/>
<dbReference type="HOGENOM" id="CLU_016801_0_0_4"/>
<dbReference type="Proteomes" id="UP000002700">
    <property type="component" value="Chromosome I"/>
</dbReference>
<dbReference type="GO" id="GO:0005829">
    <property type="term" value="C:cytosol"/>
    <property type="evidence" value="ECO:0007669"/>
    <property type="project" value="TreeGrafter"/>
</dbReference>
<dbReference type="GO" id="GO:0016020">
    <property type="term" value="C:membrane"/>
    <property type="evidence" value="ECO:0007669"/>
    <property type="project" value="UniProtKB-SubCell"/>
</dbReference>
<dbReference type="GO" id="GO:0005524">
    <property type="term" value="F:ATP binding"/>
    <property type="evidence" value="ECO:0007669"/>
    <property type="project" value="UniProtKB-UniRule"/>
</dbReference>
<dbReference type="GO" id="GO:0005536">
    <property type="term" value="F:D-glucose binding"/>
    <property type="evidence" value="ECO:0007669"/>
    <property type="project" value="InterPro"/>
</dbReference>
<dbReference type="GO" id="GO:0003677">
    <property type="term" value="F:DNA binding"/>
    <property type="evidence" value="ECO:0007669"/>
    <property type="project" value="UniProtKB-KW"/>
</dbReference>
<dbReference type="GO" id="GO:0003700">
    <property type="term" value="F:DNA-binding transcription factor activity"/>
    <property type="evidence" value="ECO:0007669"/>
    <property type="project" value="InterPro"/>
</dbReference>
<dbReference type="GO" id="GO:0004340">
    <property type="term" value="F:glucokinase activity"/>
    <property type="evidence" value="ECO:0007669"/>
    <property type="project" value="UniProtKB-UniRule"/>
</dbReference>
<dbReference type="GO" id="GO:0006096">
    <property type="term" value="P:glycolytic process"/>
    <property type="evidence" value="ECO:0007669"/>
    <property type="project" value="UniProtKB-UniRule"/>
</dbReference>
<dbReference type="CDD" id="cd24008">
    <property type="entry name" value="ASKHA_NBD_GLK"/>
    <property type="match status" value="1"/>
</dbReference>
<dbReference type="CDD" id="cd05013">
    <property type="entry name" value="SIS_RpiR"/>
    <property type="match status" value="1"/>
</dbReference>
<dbReference type="Gene3D" id="3.30.420.40">
    <property type="match status" value="1"/>
</dbReference>
<dbReference type="Gene3D" id="3.40.367.20">
    <property type="match status" value="1"/>
</dbReference>
<dbReference type="Gene3D" id="3.40.50.10490">
    <property type="entry name" value="Glucose-6-phosphate isomerase like protein, domain 1"/>
    <property type="match status" value="1"/>
</dbReference>
<dbReference type="Gene3D" id="1.10.10.10">
    <property type="entry name" value="Winged helix-like DNA-binding domain superfamily/Winged helix DNA-binding domain"/>
    <property type="match status" value="1"/>
</dbReference>
<dbReference type="HAMAP" id="MF_00524">
    <property type="entry name" value="Glucokinase"/>
    <property type="match status" value="1"/>
</dbReference>
<dbReference type="InterPro" id="IPR043129">
    <property type="entry name" value="ATPase_NBD"/>
</dbReference>
<dbReference type="InterPro" id="IPR050201">
    <property type="entry name" value="Bacterial_glucokinase"/>
</dbReference>
<dbReference type="InterPro" id="IPR003836">
    <property type="entry name" value="Glucokinase"/>
</dbReference>
<dbReference type="InterPro" id="IPR009057">
    <property type="entry name" value="Homeodomain-like_sf"/>
</dbReference>
<dbReference type="InterPro" id="IPR000281">
    <property type="entry name" value="HTH_RpiR"/>
</dbReference>
<dbReference type="InterPro" id="IPR035472">
    <property type="entry name" value="RpiR-like_SIS"/>
</dbReference>
<dbReference type="InterPro" id="IPR001347">
    <property type="entry name" value="SIS_dom"/>
</dbReference>
<dbReference type="InterPro" id="IPR046348">
    <property type="entry name" value="SIS_dom_sf"/>
</dbReference>
<dbReference type="InterPro" id="IPR036388">
    <property type="entry name" value="WH-like_DNA-bd_sf"/>
</dbReference>
<dbReference type="NCBIfam" id="TIGR00749">
    <property type="entry name" value="glk"/>
    <property type="match status" value="1"/>
</dbReference>
<dbReference type="NCBIfam" id="NF001416">
    <property type="entry name" value="PRK00292.1-3"/>
    <property type="match status" value="1"/>
</dbReference>
<dbReference type="NCBIfam" id="NF010701">
    <property type="entry name" value="PRK14101.1"/>
    <property type="match status" value="1"/>
</dbReference>
<dbReference type="PANTHER" id="PTHR47690">
    <property type="entry name" value="GLUCOKINASE"/>
    <property type="match status" value="1"/>
</dbReference>
<dbReference type="PANTHER" id="PTHR47690:SF1">
    <property type="entry name" value="GLUCOKINASE"/>
    <property type="match status" value="1"/>
</dbReference>
<dbReference type="Pfam" id="PF02685">
    <property type="entry name" value="Glucokinase"/>
    <property type="match status" value="1"/>
</dbReference>
<dbReference type="Pfam" id="PF01418">
    <property type="entry name" value="HTH_6"/>
    <property type="match status" value="1"/>
</dbReference>
<dbReference type="Pfam" id="PF01380">
    <property type="entry name" value="SIS"/>
    <property type="match status" value="1"/>
</dbReference>
<dbReference type="SUPFAM" id="SSF53067">
    <property type="entry name" value="Actin-like ATPase domain"/>
    <property type="match status" value="1"/>
</dbReference>
<dbReference type="SUPFAM" id="SSF46689">
    <property type="entry name" value="Homeodomain-like"/>
    <property type="match status" value="1"/>
</dbReference>
<dbReference type="SUPFAM" id="SSF53697">
    <property type="entry name" value="SIS domain"/>
    <property type="match status" value="1"/>
</dbReference>
<dbReference type="PROSITE" id="PS00356">
    <property type="entry name" value="HTH_LACI_1"/>
    <property type="match status" value="1"/>
</dbReference>
<dbReference type="PROSITE" id="PS51071">
    <property type="entry name" value="HTH_RPIR"/>
    <property type="match status" value="1"/>
</dbReference>
<dbReference type="PROSITE" id="PS51464">
    <property type="entry name" value="SIS"/>
    <property type="match status" value="1"/>
</dbReference>
<organism>
    <name type="scientific">Burkholderia pseudomallei (strain 1710b)</name>
    <dbReference type="NCBI Taxonomy" id="320372"/>
    <lineage>
        <taxon>Bacteria</taxon>
        <taxon>Pseudomonadati</taxon>
        <taxon>Pseudomonadota</taxon>
        <taxon>Betaproteobacteria</taxon>
        <taxon>Burkholderiales</taxon>
        <taxon>Burkholderiaceae</taxon>
        <taxon>Burkholderia</taxon>
        <taxon>pseudomallei group</taxon>
    </lineage>
</organism>
<keyword id="KW-0067">ATP-binding</keyword>
<keyword id="KW-0238">DNA-binding</keyword>
<keyword id="KW-0324">Glycolysis</keyword>
<keyword id="KW-0418">Kinase</keyword>
<keyword id="KW-0472">Membrane</keyword>
<keyword id="KW-0511">Multifunctional enzyme</keyword>
<keyword id="KW-0547">Nucleotide-binding</keyword>
<keyword id="KW-0804">Transcription</keyword>
<keyword id="KW-0805">Transcription regulation</keyword>
<keyword id="KW-0808">Transferase</keyword>
<keyword id="KW-0812">Transmembrane</keyword>
<keyword id="KW-1133">Transmembrane helix</keyword>
<proteinExistence type="inferred from homology"/>
<gene>
    <name type="primary">glk</name>
    <name type="ordered locus">BURPS1710b_3090</name>
</gene>
<name>GLK_BURP1</name>
<accession>Q3JPP0</accession>